<feature type="chain" id="PRO_0000214612" description="N(4)-acetylcytidine amidohydrolase">
    <location>
        <begin position="1"/>
        <end position="104"/>
    </location>
</feature>
<feature type="domain" description="ASCH" evidence="1">
    <location>
        <begin position="7"/>
        <end position="93"/>
    </location>
</feature>
<feature type="active site" description="Proton acceptor" evidence="2">
    <location>
        <position position="22"/>
    </location>
</feature>
<feature type="active site" description="Nucleophile" evidence="2">
    <location>
        <position position="25"/>
    </location>
</feature>
<feature type="active site" description="Proton donor" evidence="2">
    <location>
        <position position="75"/>
    </location>
</feature>
<name>AC4CH_VIBVY</name>
<gene>
    <name type="ordered locus">VVA0554</name>
</gene>
<reference key="1">
    <citation type="journal article" date="2003" name="Genome Res.">
        <title>Comparative genome analysis of Vibrio vulnificus, a marine pathogen.</title>
        <authorList>
            <person name="Chen C.-Y."/>
            <person name="Wu K.-M."/>
            <person name="Chang Y.-C."/>
            <person name="Chang C.-H."/>
            <person name="Tsai H.-C."/>
            <person name="Liao T.-L."/>
            <person name="Liu Y.-M."/>
            <person name="Chen H.-J."/>
            <person name="Shen A.B.-T."/>
            <person name="Li J.-C."/>
            <person name="Su T.-L."/>
            <person name="Shao C.-P."/>
            <person name="Lee C.-T."/>
            <person name="Hor L.-I."/>
            <person name="Tsai S.-F."/>
        </authorList>
    </citation>
    <scope>NUCLEOTIDE SEQUENCE [LARGE SCALE GENOMIC DNA]</scope>
    <source>
        <strain>YJ016</strain>
    </source>
</reference>
<comment type="function">
    <text evidence="2">Catalyzes the hydrolysis of N(4)-acetylcytidine (ac4C).</text>
</comment>
<comment type="catalytic activity">
    <reaction evidence="2">
        <text>N(4)-acetylcytidine + H2O = cytidine + acetate + H(+)</text>
        <dbReference type="Rhea" id="RHEA:62932"/>
        <dbReference type="ChEBI" id="CHEBI:15377"/>
        <dbReference type="ChEBI" id="CHEBI:15378"/>
        <dbReference type="ChEBI" id="CHEBI:17562"/>
        <dbReference type="ChEBI" id="CHEBI:30089"/>
        <dbReference type="ChEBI" id="CHEBI:70989"/>
        <dbReference type="EC" id="3.5.1.135"/>
    </reaction>
</comment>
<comment type="catalytic activity">
    <reaction evidence="2">
        <text>N(4)-acetyl-2'-deoxycytidine + H2O = 2'-deoxycytidine + acetate + H(+)</text>
        <dbReference type="Rhea" id="RHEA:62936"/>
        <dbReference type="ChEBI" id="CHEBI:15377"/>
        <dbReference type="ChEBI" id="CHEBI:15378"/>
        <dbReference type="ChEBI" id="CHEBI:15698"/>
        <dbReference type="ChEBI" id="CHEBI:30089"/>
        <dbReference type="ChEBI" id="CHEBI:146133"/>
        <dbReference type="EC" id="3.5.1.135"/>
    </reaction>
</comment>
<comment type="catalytic activity">
    <reaction evidence="2">
        <text>N(4)-acetylcytosine + H2O = cytosine + acetate + H(+)</text>
        <dbReference type="Rhea" id="RHEA:62940"/>
        <dbReference type="ChEBI" id="CHEBI:15377"/>
        <dbReference type="ChEBI" id="CHEBI:15378"/>
        <dbReference type="ChEBI" id="CHEBI:16040"/>
        <dbReference type="ChEBI" id="CHEBI:30089"/>
        <dbReference type="ChEBI" id="CHEBI:146134"/>
        <dbReference type="EC" id="3.5.1.135"/>
    </reaction>
</comment>
<comment type="similarity">
    <text evidence="2">Belongs to the N(4)-acetylcytidine amidohydrolase family.</text>
</comment>
<comment type="sequence caution" evidence="3">
    <conflict type="erroneous initiation">
        <sequence resource="EMBL-CDS" id="BAC96580"/>
    </conflict>
</comment>
<sequence length="104" mass="11967">MTAPTKMTFFSRFEADILAGKKTITIRDESEKDYQPGTTVEVSTLEEGRVFCQLKILSVEPIAFSELNEFHAEQENMTLATLKEVIQEIYPGIEQLYVIQYQRV</sequence>
<proteinExistence type="inferred from homology"/>
<accession>Q7MEW6</accession>
<keyword id="KW-0378">Hydrolase</keyword>
<evidence type="ECO:0000255" key="1"/>
<evidence type="ECO:0000255" key="2">
    <source>
        <dbReference type="HAMAP-Rule" id="MF_00684"/>
    </source>
</evidence>
<evidence type="ECO:0000305" key="3"/>
<protein>
    <recommendedName>
        <fullName evidence="2">N(4)-acetylcytidine amidohydrolase</fullName>
        <shortName evidence="2">ac4C amidohydrolase</shortName>
        <ecNumber evidence="2">3.5.1.135</ecNumber>
    </recommendedName>
</protein>
<dbReference type="EC" id="3.5.1.135" evidence="2"/>
<dbReference type="EMBL" id="BA000038">
    <property type="protein sequence ID" value="BAC96580.1"/>
    <property type="status" value="ALT_INIT"/>
    <property type="molecule type" value="Genomic_DNA"/>
</dbReference>
<dbReference type="RefSeq" id="WP_043877645.1">
    <property type="nucleotide sequence ID" value="NC_005140.1"/>
</dbReference>
<dbReference type="SMR" id="Q7MEW6"/>
<dbReference type="STRING" id="672.VV93_v1c35580"/>
<dbReference type="KEGG" id="vvy:VVA0554"/>
<dbReference type="PATRIC" id="fig|196600.6.peg.3753"/>
<dbReference type="eggNOG" id="COG3097">
    <property type="taxonomic scope" value="Bacteria"/>
</dbReference>
<dbReference type="HOGENOM" id="CLU_152586_0_0_6"/>
<dbReference type="Proteomes" id="UP000002675">
    <property type="component" value="Chromosome II"/>
</dbReference>
<dbReference type="GO" id="GO:0005829">
    <property type="term" value="C:cytosol"/>
    <property type="evidence" value="ECO:0007669"/>
    <property type="project" value="TreeGrafter"/>
</dbReference>
<dbReference type="GO" id="GO:0016813">
    <property type="term" value="F:hydrolase activity, acting on carbon-nitrogen (but not peptide) bonds, in linear amidines"/>
    <property type="evidence" value="ECO:0007669"/>
    <property type="project" value="UniProtKB-UniRule"/>
</dbReference>
<dbReference type="GO" id="GO:0106251">
    <property type="term" value="F:N4-acetylcytidine amidohydrolase activity"/>
    <property type="evidence" value="ECO:0007669"/>
    <property type="project" value="RHEA"/>
</dbReference>
<dbReference type="CDD" id="cd06552">
    <property type="entry name" value="ASCH_yqfb_like"/>
    <property type="match status" value="1"/>
</dbReference>
<dbReference type="Gene3D" id="2.30.130.30">
    <property type="entry name" value="Hypothetical protein"/>
    <property type="match status" value="1"/>
</dbReference>
<dbReference type="HAMAP" id="MF_00684">
    <property type="entry name" value="ac4C_amidohydr"/>
    <property type="match status" value="1"/>
</dbReference>
<dbReference type="InterPro" id="IPR008314">
    <property type="entry name" value="AC4CH"/>
</dbReference>
<dbReference type="InterPro" id="IPR007374">
    <property type="entry name" value="ASCH_domain"/>
</dbReference>
<dbReference type="InterPro" id="IPR015947">
    <property type="entry name" value="PUA-like_sf"/>
</dbReference>
<dbReference type="NCBIfam" id="NF003443">
    <property type="entry name" value="PRK04980.1"/>
    <property type="match status" value="1"/>
</dbReference>
<dbReference type="PANTHER" id="PTHR38088">
    <property type="entry name" value="UCP029143 FAMILY PROTEIN"/>
    <property type="match status" value="1"/>
</dbReference>
<dbReference type="PANTHER" id="PTHR38088:SF2">
    <property type="entry name" value="UCP029143 FAMILY PROTEIN"/>
    <property type="match status" value="1"/>
</dbReference>
<dbReference type="Pfam" id="PF04266">
    <property type="entry name" value="ASCH"/>
    <property type="match status" value="1"/>
</dbReference>
<dbReference type="PIRSF" id="PIRSF029143">
    <property type="entry name" value="UCP029143"/>
    <property type="match status" value="1"/>
</dbReference>
<dbReference type="SMART" id="SM01022">
    <property type="entry name" value="ASCH"/>
    <property type="match status" value="1"/>
</dbReference>
<dbReference type="SUPFAM" id="SSF88697">
    <property type="entry name" value="PUA domain-like"/>
    <property type="match status" value="1"/>
</dbReference>
<organism>
    <name type="scientific">Vibrio vulnificus (strain YJ016)</name>
    <dbReference type="NCBI Taxonomy" id="196600"/>
    <lineage>
        <taxon>Bacteria</taxon>
        <taxon>Pseudomonadati</taxon>
        <taxon>Pseudomonadota</taxon>
        <taxon>Gammaproteobacteria</taxon>
        <taxon>Vibrionales</taxon>
        <taxon>Vibrionaceae</taxon>
        <taxon>Vibrio</taxon>
    </lineage>
</organism>